<sequence length="338" mass="38003">MNDKLQEEHNEKDTTSQINGFTPPHMSIDFHSNNNSNIIETIGVSKRLGNSVLSELDSRASSKFEFLKDQSEQQYNGDKNNEPKSGSYNINEFFQAKHDSQFGQMESLDTHYTLLHTPKRKSQHAIPQDRSDSMKRSRPSRSIPYTTPVVNDITRRIRRLKLRNSLVNGNDIVARARSMQANSNINSIKNTPLSKPKPFMHKPNFLMPTTNSLNKINSAHRNTSSSSTASSIPRSKVHRSTSIRDLHAKTKPVERTPVAQGTNSQLKNSVSVFDRLYKQTTFSRSTSMNNLSSGTSAKSKEHTNVKTRLVKSKTSGSLSSNLKQSTATGTKSDRPIWR</sequence>
<dbReference type="EMBL" id="AAFW02000011">
    <property type="protein sequence ID" value="EDN64585.1"/>
    <property type="molecule type" value="Genomic_DNA"/>
</dbReference>
<dbReference type="TopDownProteomics" id="A6ZKR6"/>
<dbReference type="HOGENOM" id="CLU_821841_0_0_1"/>
<dbReference type="Proteomes" id="UP000007060">
    <property type="component" value="Unassembled WGS sequence"/>
</dbReference>
<dbReference type="GO" id="GO:0005935">
    <property type="term" value="C:cellular bud neck"/>
    <property type="evidence" value="ECO:0007669"/>
    <property type="project" value="UniProtKB-SubCell"/>
</dbReference>
<dbReference type="GO" id="GO:0005737">
    <property type="term" value="C:cytoplasm"/>
    <property type="evidence" value="ECO:0007669"/>
    <property type="project" value="UniProtKB-KW"/>
</dbReference>
<dbReference type="GO" id="GO:0005819">
    <property type="term" value="C:spindle"/>
    <property type="evidence" value="ECO:0007669"/>
    <property type="project" value="UniProtKB-SubCell"/>
</dbReference>
<dbReference type="GO" id="GO:0008017">
    <property type="term" value="F:microtubule binding"/>
    <property type="evidence" value="ECO:0007669"/>
    <property type="project" value="InterPro"/>
</dbReference>
<dbReference type="GO" id="GO:0051301">
    <property type="term" value="P:cell division"/>
    <property type="evidence" value="ECO:0007669"/>
    <property type="project" value="UniProtKB-KW"/>
</dbReference>
<dbReference type="GO" id="GO:0007059">
    <property type="term" value="P:chromosome segregation"/>
    <property type="evidence" value="ECO:0007669"/>
    <property type="project" value="UniProtKB-KW"/>
</dbReference>
<dbReference type="InterPro" id="IPR031401">
    <property type="entry name" value="She1"/>
</dbReference>
<dbReference type="Pfam" id="PF17077">
    <property type="entry name" value="Msap1"/>
    <property type="match status" value="1"/>
</dbReference>
<proteinExistence type="inferred from homology"/>
<keyword id="KW-0131">Cell cycle</keyword>
<keyword id="KW-0132">Cell division</keyword>
<keyword id="KW-0159">Chromosome partition</keyword>
<keyword id="KW-0963">Cytoplasm</keyword>
<keyword id="KW-0206">Cytoskeleton</keyword>
<keyword id="KW-0498">Mitosis</keyword>
<keyword id="KW-0597">Phosphoprotein</keyword>
<feature type="chain" id="PRO_0000333423" description="Mitotic spindle-associated protein SHE1">
    <location>
        <begin position="1"/>
        <end position="338"/>
    </location>
</feature>
<feature type="region of interest" description="Disordered" evidence="3">
    <location>
        <begin position="1"/>
        <end position="29"/>
    </location>
</feature>
<feature type="region of interest" description="Disordered" evidence="3">
    <location>
        <begin position="67"/>
        <end position="88"/>
    </location>
</feature>
<feature type="region of interest" description="Disordered" evidence="3">
    <location>
        <begin position="116"/>
        <end position="146"/>
    </location>
</feature>
<feature type="region of interest" description="Disordered" evidence="3">
    <location>
        <begin position="210"/>
        <end position="263"/>
    </location>
</feature>
<feature type="region of interest" description="Disordered" evidence="3">
    <location>
        <begin position="284"/>
        <end position="338"/>
    </location>
</feature>
<feature type="compositionally biased region" description="Basic and acidic residues" evidence="3">
    <location>
        <begin position="1"/>
        <end position="14"/>
    </location>
</feature>
<feature type="compositionally biased region" description="Polar residues" evidence="3">
    <location>
        <begin position="72"/>
        <end position="88"/>
    </location>
</feature>
<feature type="compositionally biased region" description="Low complexity" evidence="3">
    <location>
        <begin position="216"/>
        <end position="234"/>
    </location>
</feature>
<feature type="compositionally biased region" description="Basic and acidic residues" evidence="3">
    <location>
        <begin position="242"/>
        <end position="254"/>
    </location>
</feature>
<feature type="compositionally biased region" description="Polar residues" evidence="3">
    <location>
        <begin position="284"/>
        <end position="297"/>
    </location>
</feature>
<feature type="compositionally biased region" description="Polar residues" evidence="3">
    <location>
        <begin position="312"/>
        <end position="330"/>
    </location>
</feature>
<feature type="modified residue" description="Phosphoserine" evidence="2">
    <location>
        <position position="165"/>
    </location>
</feature>
<reference key="1">
    <citation type="journal article" date="2007" name="Proc. Natl. Acad. Sci. U.S.A.">
        <title>Genome sequencing and comparative analysis of Saccharomyces cerevisiae strain YJM789.</title>
        <authorList>
            <person name="Wei W."/>
            <person name="McCusker J.H."/>
            <person name="Hyman R.W."/>
            <person name="Jones T."/>
            <person name="Ning Y."/>
            <person name="Cao Z."/>
            <person name="Gu Z."/>
            <person name="Bruno D."/>
            <person name="Miranda M."/>
            <person name="Nguyen M."/>
            <person name="Wilhelmy J."/>
            <person name="Komp C."/>
            <person name="Tamse R."/>
            <person name="Wang X."/>
            <person name="Jia P."/>
            <person name="Luedi P."/>
            <person name="Oefner P.J."/>
            <person name="David L."/>
            <person name="Dietrich F.S."/>
            <person name="Li Y."/>
            <person name="Davis R.W."/>
            <person name="Steinmetz L.M."/>
        </authorList>
    </citation>
    <scope>NUCLEOTIDE SEQUENCE [LARGE SCALE GENOMIC DNA]</scope>
    <source>
        <strain>YJM789</strain>
    </source>
</reference>
<organism>
    <name type="scientific">Saccharomyces cerevisiae (strain YJM789)</name>
    <name type="common">Baker's yeast</name>
    <dbReference type="NCBI Taxonomy" id="307796"/>
    <lineage>
        <taxon>Eukaryota</taxon>
        <taxon>Fungi</taxon>
        <taxon>Dikarya</taxon>
        <taxon>Ascomycota</taxon>
        <taxon>Saccharomycotina</taxon>
        <taxon>Saccharomycetes</taxon>
        <taxon>Saccharomycetales</taxon>
        <taxon>Saccharomycetaceae</taxon>
        <taxon>Saccharomyces</taxon>
    </lineage>
</organism>
<name>SHE1_YEAS7</name>
<accession>A6ZKR6</accession>
<comment type="function">
    <text evidence="1">May have a role related to the spindle integrity function of the DAM1 complex, which is essential for proper chromosome segregation. Causes growth arrest when highly overexpressed (By similarity).</text>
</comment>
<comment type="subcellular location">
    <subcellularLocation>
        <location evidence="1">Cytoplasm</location>
        <location evidence="1">Cytoskeleton</location>
    </subcellularLocation>
    <subcellularLocation>
        <location evidence="1">Cytoplasm</location>
        <location evidence="1">Cytoskeleton</location>
        <location evidence="1">Spindle</location>
    </subcellularLocation>
    <subcellularLocation>
        <location evidence="1">Bud neck</location>
    </subcellularLocation>
</comment>
<comment type="similarity">
    <text evidence="4">Belongs to the SHE1 family.</text>
</comment>
<gene>
    <name type="primary">SHE1</name>
    <name type="ORF">SCY_0186</name>
</gene>
<evidence type="ECO:0000250" key="1"/>
<evidence type="ECO:0000250" key="2">
    <source>
        <dbReference type="UniProtKB" id="P38200"/>
    </source>
</evidence>
<evidence type="ECO:0000256" key="3">
    <source>
        <dbReference type="SAM" id="MobiDB-lite"/>
    </source>
</evidence>
<evidence type="ECO:0000305" key="4"/>
<protein>
    <recommendedName>
        <fullName>Mitotic spindle-associated protein SHE1</fullName>
    </recommendedName>
    <alternativeName>
        <fullName>Sensitive to high expression protein 1</fullName>
    </alternativeName>
</protein>